<evidence type="ECO:0000250" key="1"/>
<evidence type="ECO:0000250" key="2">
    <source>
        <dbReference type="UniProtKB" id="A2A3K4"/>
    </source>
</evidence>
<evidence type="ECO:0000255" key="3">
    <source>
        <dbReference type="PROSITE-ProRule" id="PRU00160"/>
    </source>
</evidence>
<evidence type="ECO:0000305" key="4"/>
<reference key="1">
    <citation type="journal article" date="2009" name="Science">
        <title>The genome sequence of taurine cattle: a window to ruminant biology and evolution.</title>
        <authorList>
            <consortium name="The bovine genome sequencing and analysis consortium"/>
        </authorList>
    </citation>
    <scope>NUCLEOTIDE SEQUENCE [LARGE SCALE GENOMIC DNA]</scope>
    <source>
        <strain>Hereford</strain>
    </source>
</reference>
<reference key="2">
    <citation type="submission" date="2007-08" db="EMBL/GenBank/DDBJ databases">
        <authorList>
            <consortium name="NIH - Mammalian Gene Collection (MGC) project"/>
        </authorList>
    </citation>
    <scope>NUCLEOTIDE SEQUENCE [LARGE SCALE MRNA] OF 1-784</scope>
    <source>
        <strain>Hereford</strain>
        <tissue>Fetal pons</tissue>
    </source>
</reference>
<feature type="chain" id="PRO_0000312211" description="Protein tyrosine phosphatase domain-containing protein 1">
    <location>
        <begin position="1"/>
        <end position="796"/>
    </location>
</feature>
<feature type="domain" description="Tyrosine-protein phosphatase" evidence="3">
    <location>
        <begin position="126"/>
        <end position="297"/>
    </location>
</feature>
<feature type="active site" description="Phosphocysteine intermediate" evidence="3">
    <location>
        <position position="234"/>
    </location>
</feature>
<feature type="modified residue" description="Phosphoserine" evidence="2">
    <location>
        <position position="435"/>
    </location>
</feature>
<feature type="modified residue" description="Phosphoserine" evidence="2">
    <location>
        <position position="437"/>
    </location>
</feature>
<organism>
    <name type="scientific">Bos taurus</name>
    <name type="common">Bovine</name>
    <dbReference type="NCBI Taxonomy" id="9913"/>
    <lineage>
        <taxon>Eukaryota</taxon>
        <taxon>Metazoa</taxon>
        <taxon>Chordata</taxon>
        <taxon>Craniata</taxon>
        <taxon>Vertebrata</taxon>
        <taxon>Euteleostomi</taxon>
        <taxon>Mammalia</taxon>
        <taxon>Eutheria</taxon>
        <taxon>Laurasiatheria</taxon>
        <taxon>Artiodactyla</taxon>
        <taxon>Ruminantia</taxon>
        <taxon>Pecora</taxon>
        <taxon>Bovidae</taxon>
        <taxon>Bovinae</taxon>
        <taxon>Bos</taxon>
    </lineage>
</organism>
<gene>
    <name type="primary">PTPDC1</name>
</gene>
<sequence length="796" mass="89386">MQDPPRRLSAVPFLSSFFEGRRHSASDPILRLQQGRRSSAAKVLSSSSLQVMVAMSSVSCAERNPTCPERKRNSGRPTPKYTKVGERLRHVIPGHVACSMACGGKACKYENAARWSEQEQAVKGIYSSWVTDNILAMARPSTEVLEKFCIIEQFRSHGIKSIINLQRPGEHASCGNPLEQESGFTYLPEAFMEAGIYFYNFGWKDYGVASLTTILDMVKVMTFALQEGKVAIHCHAGLGRTGVLIACYLVFATRMTADQAIIFVRAKRPNSIQTRGQLLCVREFTQFLIPLRNIFSCCDPKAHAVTLAQYLIRQRHLLHGYEARLLKHIPKIIHLVCKLLLDLAENRPVVTEVADIPGLSAEIEKTVSEMITRQLDKELLRHDSDASDSFTPTAVVMDFENQDVVLSSEQELDPLWKRRNVECLQPLAHLKRQLSYSDSDLKRAESLLEQGRTPWTVPAQALLCHNPRQQKHISRCYSPQSPQLDLNKETLVRNTFSFWNHTKFGVPEGLKDDGSLIFHRTSIPKEVQRSRTFSSGISDSYNPGEPVTPNSANIPKGPNSSQQKVYHCECESHGGCGPSSVAEDGETCRRPVDCGSSPKAQFLGNETQNSKYLSEVAAHMPLQSELSVEARRILAAKALANLNEIAEKEEVKKKVEMWQKELNSRDGAWERICGEKDPFILCSLMWSWVEQLKEPVITKEDMDMLVDRCADASEALFLLEKGQQQTILCVLHCIVSLQTIPADVEEAVLARAIKAFTKVNFDSENGPIVYNTLKKIFKRTLEEKRKMTKDNPEPGI</sequence>
<protein>
    <recommendedName>
        <fullName>Protein tyrosine phosphatase domain-containing protein 1</fullName>
        <ecNumber>3.1.3.-</ecNumber>
    </recommendedName>
</protein>
<accession>A7E379</accession>
<proteinExistence type="evidence at transcript level"/>
<dbReference type="EC" id="3.1.3.-"/>
<dbReference type="EMBL" id="AAFC03031364">
    <property type="status" value="NOT_ANNOTATED_CDS"/>
    <property type="molecule type" value="Genomic_DNA"/>
</dbReference>
<dbReference type="EMBL" id="BC151750">
    <property type="protein sequence ID" value="AAI51751.1"/>
    <property type="status" value="ALT_SEQ"/>
    <property type="molecule type" value="mRNA"/>
</dbReference>
<dbReference type="RefSeq" id="NP_001193525.1">
    <property type="nucleotide sequence ID" value="NM_001206596.1"/>
</dbReference>
<dbReference type="SMR" id="A7E379"/>
<dbReference type="FunCoup" id="A7E379">
    <property type="interactions" value="411"/>
</dbReference>
<dbReference type="STRING" id="9913.ENSBTAP00000007630"/>
<dbReference type="PaxDb" id="9913-ENSBTAP00000007630"/>
<dbReference type="GeneID" id="519311"/>
<dbReference type="KEGG" id="bta:519311"/>
<dbReference type="CTD" id="138639"/>
<dbReference type="eggNOG" id="KOG1720">
    <property type="taxonomic scope" value="Eukaryota"/>
</dbReference>
<dbReference type="InParanoid" id="A7E379"/>
<dbReference type="OrthoDB" id="542013at2759"/>
<dbReference type="Proteomes" id="UP000009136">
    <property type="component" value="Unplaced"/>
</dbReference>
<dbReference type="GO" id="GO:0005737">
    <property type="term" value="C:cytoplasm"/>
    <property type="evidence" value="ECO:0000318"/>
    <property type="project" value="GO_Central"/>
</dbReference>
<dbReference type="GO" id="GO:0004725">
    <property type="term" value="F:protein tyrosine phosphatase activity"/>
    <property type="evidence" value="ECO:0000318"/>
    <property type="project" value="GO_Central"/>
</dbReference>
<dbReference type="GO" id="GO:0060271">
    <property type="term" value="P:cilium assembly"/>
    <property type="evidence" value="ECO:0000318"/>
    <property type="project" value="GO_Central"/>
</dbReference>
<dbReference type="CDD" id="cd14506">
    <property type="entry name" value="PTP_PTPDC1"/>
    <property type="match status" value="1"/>
</dbReference>
<dbReference type="FunFam" id="3.90.190.10:FF:000027">
    <property type="entry name" value="Protein tyrosine phosphatase domain containing 1"/>
    <property type="match status" value="1"/>
</dbReference>
<dbReference type="Gene3D" id="3.90.190.10">
    <property type="entry name" value="Protein tyrosine phosphatase superfamily"/>
    <property type="match status" value="1"/>
</dbReference>
<dbReference type="InterPro" id="IPR000340">
    <property type="entry name" value="Dual-sp_phosphatase_cat-dom"/>
</dbReference>
<dbReference type="InterPro" id="IPR029021">
    <property type="entry name" value="Prot-tyrosine_phosphatase-like"/>
</dbReference>
<dbReference type="InterPro" id="IPR050561">
    <property type="entry name" value="PTP"/>
</dbReference>
<dbReference type="InterPro" id="IPR049573">
    <property type="entry name" value="PTPDC1_PTP"/>
</dbReference>
<dbReference type="InterPro" id="IPR016130">
    <property type="entry name" value="Tyr_Pase_AS"/>
</dbReference>
<dbReference type="InterPro" id="IPR003595">
    <property type="entry name" value="Tyr_Pase_cat"/>
</dbReference>
<dbReference type="InterPro" id="IPR000387">
    <property type="entry name" value="Tyr_Pase_dom"/>
</dbReference>
<dbReference type="InterPro" id="IPR020422">
    <property type="entry name" value="TYR_PHOSPHATASE_DUAL_dom"/>
</dbReference>
<dbReference type="PANTHER" id="PTHR23339">
    <property type="entry name" value="TYROSINE SPECIFIC PROTEIN PHOSPHATASE AND DUAL SPECIFICITY PROTEIN PHOSPHATASE"/>
    <property type="match status" value="1"/>
</dbReference>
<dbReference type="Pfam" id="PF00782">
    <property type="entry name" value="DSPc"/>
    <property type="match status" value="1"/>
</dbReference>
<dbReference type="SMART" id="SM00195">
    <property type="entry name" value="DSPc"/>
    <property type="match status" value="1"/>
</dbReference>
<dbReference type="SMART" id="SM00404">
    <property type="entry name" value="PTPc_motif"/>
    <property type="match status" value="1"/>
</dbReference>
<dbReference type="SUPFAM" id="SSF52799">
    <property type="entry name" value="(Phosphotyrosine protein) phosphatases II"/>
    <property type="match status" value="1"/>
</dbReference>
<dbReference type="PROSITE" id="PS00383">
    <property type="entry name" value="TYR_PHOSPHATASE_1"/>
    <property type="match status" value="1"/>
</dbReference>
<dbReference type="PROSITE" id="PS50056">
    <property type="entry name" value="TYR_PHOSPHATASE_2"/>
    <property type="match status" value="1"/>
</dbReference>
<dbReference type="PROSITE" id="PS50054">
    <property type="entry name" value="TYR_PHOSPHATASE_DUAL"/>
    <property type="match status" value="1"/>
</dbReference>
<comment type="function">
    <text evidence="1">May play roles in cilia formation and/or maintenance.</text>
</comment>
<comment type="similarity">
    <text evidence="4">Belongs to the protein-tyrosine phosphatase family. Non-receptor class PTPDC1 subfamily.</text>
</comment>
<comment type="sequence caution" evidence="4">
    <conflict type="miscellaneous discrepancy">
        <sequence resource="EMBL-CDS" id="AAI51751"/>
    </conflict>
    <text>Contaminating sequence. Potential poly-A sequence.</text>
</comment>
<name>PTPC1_BOVIN</name>
<keyword id="KW-0970">Cilium biogenesis/degradation</keyword>
<keyword id="KW-0378">Hydrolase</keyword>
<keyword id="KW-0597">Phosphoprotein</keyword>
<keyword id="KW-0904">Protein phosphatase</keyword>
<keyword id="KW-1185">Reference proteome</keyword>